<reference key="1">
    <citation type="submission" date="2006-12" db="EMBL/GenBank/DDBJ databases">
        <title>Complete sequence of chromosome 1 of Verminephrobacter eiseniae EF01-2.</title>
        <authorList>
            <person name="Copeland A."/>
            <person name="Lucas S."/>
            <person name="Lapidus A."/>
            <person name="Barry K."/>
            <person name="Detter J.C."/>
            <person name="Glavina del Rio T."/>
            <person name="Dalin E."/>
            <person name="Tice H."/>
            <person name="Pitluck S."/>
            <person name="Chertkov O."/>
            <person name="Brettin T."/>
            <person name="Bruce D."/>
            <person name="Han C."/>
            <person name="Tapia R."/>
            <person name="Gilna P."/>
            <person name="Schmutz J."/>
            <person name="Larimer F."/>
            <person name="Land M."/>
            <person name="Hauser L."/>
            <person name="Kyrpides N."/>
            <person name="Kim E."/>
            <person name="Stahl D."/>
            <person name="Richardson P."/>
        </authorList>
    </citation>
    <scope>NUCLEOTIDE SEQUENCE [LARGE SCALE GENOMIC DNA]</scope>
    <source>
        <strain>EF01-2</strain>
    </source>
</reference>
<comment type="catalytic activity">
    <reaction evidence="1">
        <text>1-(5-phospho-beta-D-ribosyl)-5-[(5-phospho-beta-D-ribosylamino)methylideneamino]imidazole-4-carboxamide = 5-[(5-phospho-1-deoxy-D-ribulos-1-ylimino)methylamino]-1-(5-phospho-beta-D-ribosyl)imidazole-4-carboxamide</text>
        <dbReference type="Rhea" id="RHEA:15469"/>
        <dbReference type="ChEBI" id="CHEBI:58435"/>
        <dbReference type="ChEBI" id="CHEBI:58525"/>
        <dbReference type="EC" id="5.3.1.16"/>
    </reaction>
</comment>
<comment type="pathway">
    <text evidence="1">Amino-acid biosynthesis; L-histidine biosynthesis; L-histidine from 5-phospho-alpha-D-ribose 1-diphosphate: step 4/9.</text>
</comment>
<comment type="subcellular location">
    <subcellularLocation>
        <location evidence="1">Cytoplasm</location>
    </subcellularLocation>
</comment>
<comment type="similarity">
    <text evidence="1">Belongs to the HisA/HisF family.</text>
</comment>
<feature type="chain" id="PRO_0000290560" description="1-(5-phosphoribosyl)-5-[(5-phosphoribosylamino)methylideneamino] imidazole-4-carboxamide isomerase">
    <location>
        <begin position="1"/>
        <end position="245"/>
    </location>
</feature>
<feature type="active site" description="Proton acceptor" evidence="1">
    <location>
        <position position="8"/>
    </location>
</feature>
<feature type="active site" description="Proton donor" evidence="1">
    <location>
        <position position="131"/>
    </location>
</feature>
<keyword id="KW-0028">Amino-acid biosynthesis</keyword>
<keyword id="KW-0963">Cytoplasm</keyword>
<keyword id="KW-0368">Histidine biosynthesis</keyword>
<keyword id="KW-0413">Isomerase</keyword>
<keyword id="KW-1185">Reference proteome</keyword>
<sequence length="245" mass="25754">MLLIPAIDLKDGHCVRLRQGDMDQSTTFGENPAAMARQWIDAGARRLHLVDLNGALAGMPKNYGAIKSILKEVGDDIPVQLGGGIRDLDTIEKYIDGGLRYVIIGTAAVKNPGFLKDACSAFGGHIIVGLDARDGKVATDGWSKLTGHGVVDLARKFEDWGVESIIYTDIGRDGMLSGINIDATVALAQALSIPVIASGGLSGMADIEQLCAVQDEGIEGVICGRAIYSGDLDFAAAQARADEMG</sequence>
<evidence type="ECO:0000255" key="1">
    <source>
        <dbReference type="HAMAP-Rule" id="MF_01014"/>
    </source>
</evidence>
<name>HIS4_VEREI</name>
<organism>
    <name type="scientific">Verminephrobacter eiseniae (strain EF01-2)</name>
    <dbReference type="NCBI Taxonomy" id="391735"/>
    <lineage>
        <taxon>Bacteria</taxon>
        <taxon>Pseudomonadati</taxon>
        <taxon>Pseudomonadota</taxon>
        <taxon>Betaproteobacteria</taxon>
        <taxon>Burkholderiales</taxon>
        <taxon>Comamonadaceae</taxon>
        <taxon>Verminephrobacter</taxon>
    </lineage>
</organism>
<proteinExistence type="inferred from homology"/>
<gene>
    <name evidence="1" type="primary">hisA</name>
    <name type="ordered locus">Veis_4377</name>
</gene>
<accession>A1WR23</accession>
<dbReference type="EC" id="5.3.1.16" evidence="1"/>
<dbReference type="EMBL" id="CP000542">
    <property type="protein sequence ID" value="ABM60080.1"/>
    <property type="molecule type" value="Genomic_DNA"/>
</dbReference>
<dbReference type="RefSeq" id="WP_011812066.1">
    <property type="nucleotide sequence ID" value="NC_008786.1"/>
</dbReference>
<dbReference type="SMR" id="A1WR23"/>
<dbReference type="STRING" id="391735.Veis_4377"/>
<dbReference type="GeneID" id="76462694"/>
<dbReference type="KEGG" id="vei:Veis_4377"/>
<dbReference type="eggNOG" id="COG0106">
    <property type="taxonomic scope" value="Bacteria"/>
</dbReference>
<dbReference type="HOGENOM" id="CLU_048577_1_1_4"/>
<dbReference type="OrthoDB" id="9807749at2"/>
<dbReference type="UniPathway" id="UPA00031">
    <property type="reaction ID" value="UER00009"/>
</dbReference>
<dbReference type="Proteomes" id="UP000000374">
    <property type="component" value="Chromosome"/>
</dbReference>
<dbReference type="GO" id="GO:0005737">
    <property type="term" value="C:cytoplasm"/>
    <property type="evidence" value="ECO:0007669"/>
    <property type="project" value="UniProtKB-SubCell"/>
</dbReference>
<dbReference type="GO" id="GO:0003949">
    <property type="term" value="F:1-(5-phosphoribosyl)-5-[(5-phosphoribosylamino)methylideneamino]imidazole-4-carboxamide isomerase activity"/>
    <property type="evidence" value="ECO:0007669"/>
    <property type="project" value="UniProtKB-UniRule"/>
</dbReference>
<dbReference type="GO" id="GO:0000105">
    <property type="term" value="P:L-histidine biosynthetic process"/>
    <property type="evidence" value="ECO:0007669"/>
    <property type="project" value="UniProtKB-UniRule"/>
</dbReference>
<dbReference type="GO" id="GO:0000162">
    <property type="term" value="P:L-tryptophan biosynthetic process"/>
    <property type="evidence" value="ECO:0007669"/>
    <property type="project" value="TreeGrafter"/>
</dbReference>
<dbReference type="CDD" id="cd04732">
    <property type="entry name" value="HisA"/>
    <property type="match status" value="1"/>
</dbReference>
<dbReference type="FunFam" id="3.20.20.70:FF:000009">
    <property type="entry name" value="1-(5-phosphoribosyl)-5-[(5-phosphoribosylamino)methylideneamino] imidazole-4-carboxamide isomerase"/>
    <property type="match status" value="1"/>
</dbReference>
<dbReference type="Gene3D" id="3.20.20.70">
    <property type="entry name" value="Aldolase class I"/>
    <property type="match status" value="1"/>
</dbReference>
<dbReference type="HAMAP" id="MF_01014">
    <property type="entry name" value="HisA"/>
    <property type="match status" value="1"/>
</dbReference>
<dbReference type="InterPro" id="IPR013785">
    <property type="entry name" value="Aldolase_TIM"/>
</dbReference>
<dbReference type="InterPro" id="IPR006062">
    <property type="entry name" value="His_biosynth"/>
</dbReference>
<dbReference type="InterPro" id="IPR006063">
    <property type="entry name" value="HisA_bact_arch"/>
</dbReference>
<dbReference type="InterPro" id="IPR044524">
    <property type="entry name" value="Isoase_HisA-like"/>
</dbReference>
<dbReference type="InterPro" id="IPR023016">
    <property type="entry name" value="Isoase_HisA-like_bact"/>
</dbReference>
<dbReference type="InterPro" id="IPR011060">
    <property type="entry name" value="RibuloseP-bd_barrel"/>
</dbReference>
<dbReference type="NCBIfam" id="TIGR00007">
    <property type="entry name" value="1-(5-phosphoribosyl)-5-[(5-phosphoribosylamino)methylideneamino]imidazole-4-carboxamide isomerase"/>
    <property type="match status" value="1"/>
</dbReference>
<dbReference type="PANTHER" id="PTHR43090">
    <property type="entry name" value="1-(5-PHOSPHORIBOSYL)-5-[(5-PHOSPHORIBOSYLAMINO)METHYLIDENEAMINO] IMIDAZOLE-4-CARBOXAMIDE ISOMERASE"/>
    <property type="match status" value="1"/>
</dbReference>
<dbReference type="PANTHER" id="PTHR43090:SF2">
    <property type="entry name" value="1-(5-PHOSPHORIBOSYL)-5-[(5-PHOSPHORIBOSYLAMINO)METHYLIDENEAMINO] IMIDAZOLE-4-CARBOXAMIDE ISOMERASE"/>
    <property type="match status" value="1"/>
</dbReference>
<dbReference type="Pfam" id="PF00977">
    <property type="entry name" value="His_biosynth"/>
    <property type="match status" value="1"/>
</dbReference>
<dbReference type="SUPFAM" id="SSF51366">
    <property type="entry name" value="Ribulose-phoshate binding barrel"/>
    <property type="match status" value="1"/>
</dbReference>
<protein>
    <recommendedName>
        <fullName evidence="1">1-(5-phosphoribosyl)-5-[(5-phosphoribosylamino)methylideneamino] imidazole-4-carboxamide isomerase</fullName>
        <ecNumber evidence="1">5.3.1.16</ecNumber>
    </recommendedName>
    <alternativeName>
        <fullName evidence="1">Phosphoribosylformimino-5-aminoimidazole carboxamide ribotide isomerase</fullName>
    </alternativeName>
</protein>